<accession>B7L5P5</accession>
<proteinExistence type="inferred from homology"/>
<comment type="function">
    <text evidence="1">Involved in the third step of the chorismate pathway, which leads to the biosynthesis of aromatic amino acids. Catalyzes the cis-dehydration of 3-dehydroquinate (DHQ) and introduces the first double bond of the aromatic ring to yield 3-dehydroshikimate.</text>
</comment>
<comment type="catalytic activity">
    <reaction evidence="1">
        <text>3-dehydroquinate = 3-dehydroshikimate + H2O</text>
        <dbReference type="Rhea" id="RHEA:21096"/>
        <dbReference type="ChEBI" id="CHEBI:15377"/>
        <dbReference type="ChEBI" id="CHEBI:16630"/>
        <dbReference type="ChEBI" id="CHEBI:32364"/>
        <dbReference type="EC" id="4.2.1.10"/>
    </reaction>
</comment>
<comment type="pathway">
    <text evidence="1">Metabolic intermediate biosynthesis; chorismate biosynthesis; chorismate from D-erythrose 4-phosphate and phosphoenolpyruvate: step 3/7.</text>
</comment>
<comment type="subunit">
    <text evidence="1">Homodimer.</text>
</comment>
<comment type="similarity">
    <text evidence="1">Belongs to the type-I 3-dehydroquinase family.</text>
</comment>
<protein>
    <recommendedName>
        <fullName evidence="1">3-dehydroquinate dehydratase</fullName>
        <shortName evidence="1">3-dehydroquinase</shortName>
        <ecNumber evidence="1">4.2.1.10</ecNumber>
    </recommendedName>
    <alternativeName>
        <fullName evidence="1">Type I DHQase</fullName>
    </alternativeName>
    <alternativeName>
        <fullName evidence="1">Type I dehydroquinase</fullName>
        <shortName evidence="1">DHQ1</shortName>
    </alternativeName>
</protein>
<evidence type="ECO:0000255" key="1">
    <source>
        <dbReference type="HAMAP-Rule" id="MF_00214"/>
    </source>
</evidence>
<name>AROD_ECO55</name>
<dbReference type="EC" id="4.2.1.10" evidence="1"/>
<dbReference type="EMBL" id="CU928145">
    <property type="protein sequence ID" value="CAU97718.1"/>
    <property type="molecule type" value="Genomic_DNA"/>
</dbReference>
<dbReference type="RefSeq" id="WP_000860178.1">
    <property type="nucleotide sequence ID" value="NC_011748.1"/>
</dbReference>
<dbReference type="SMR" id="B7L5P5"/>
<dbReference type="KEGG" id="eck:EC55989_1860"/>
<dbReference type="HOGENOM" id="CLU_064444_0_0_6"/>
<dbReference type="UniPathway" id="UPA00053">
    <property type="reaction ID" value="UER00086"/>
</dbReference>
<dbReference type="Proteomes" id="UP000000746">
    <property type="component" value="Chromosome"/>
</dbReference>
<dbReference type="GO" id="GO:0003855">
    <property type="term" value="F:3-dehydroquinate dehydratase activity"/>
    <property type="evidence" value="ECO:0007669"/>
    <property type="project" value="UniProtKB-UniRule"/>
</dbReference>
<dbReference type="GO" id="GO:0046279">
    <property type="term" value="P:3,4-dihydroxybenzoate biosynthetic process"/>
    <property type="evidence" value="ECO:0007669"/>
    <property type="project" value="UniProtKB-ARBA"/>
</dbReference>
<dbReference type="GO" id="GO:0008652">
    <property type="term" value="P:amino acid biosynthetic process"/>
    <property type="evidence" value="ECO:0007669"/>
    <property type="project" value="UniProtKB-KW"/>
</dbReference>
<dbReference type="GO" id="GO:0009073">
    <property type="term" value="P:aromatic amino acid family biosynthetic process"/>
    <property type="evidence" value="ECO:0007669"/>
    <property type="project" value="UniProtKB-KW"/>
</dbReference>
<dbReference type="GO" id="GO:0009423">
    <property type="term" value="P:chorismate biosynthetic process"/>
    <property type="evidence" value="ECO:0007669"/>
    <property type="project" value="UniProtKB-UniRule"/>
</dbReference>
<dbReference type="CDD" id="cd00502">
    <property type="entry name" value="DHQase_I"/>
    <property type="match status" value="1"/>
</dbReference>
<dbReference type="FunFam" id="3.20.20.70:FF:000047">
    <property type="entry name" value="3-dehydroquinate dehydratase"/>
    <property type="match status" value="1"/>
</dbReference>
<dbReference type="Gene3D" id="3.20.20.70">
    <property type="entry name" value="Aldolase class I"/>
    <property type="match status" value="1"/>
</dbReference>
<dbReference type="HAMAP" id="MF_00214">
    <property type="entry name" value="AroD"/>
    <property type="match status" value="1"/>
</dbReference>
<dbReference type="InterPro" id="IPR018508">
    <property type="entry name" value="3-dehydroquinate_DH_AS"/>
</dbReference>
<dbReference type="InterPro" id="IPR013785">
    <property type="entry name" value="Aldolase_TIM"/>
</dbReference>
<dbReference type="InterPro" id="IPR001381">
    <property type="entry name" value="DHquinase_I"/>
</dbReference>
<dbReference type="InterPro" id="IPR050146">
    <property type="entry name" value="Type-I_3-dehydroquinase"/>
</dbReference>
<dbReference type="NCBIfam" id="TIGR01093">
    <property type="entry name" value="aroD"/>
    <property type="match status" value="1"/>
</dbReference>
<dbReference type="PANTHER" id="PTHR43699">
    <property type="entry name" value="3-DEHYDROQUINATE DEHYDRATASE"/>
    <property type="match status" value="1"/>
</dbReference>
<dbReference type="PANTHER" id="PTHR43699:SF1">
    <property type="entry name" value="3-DEHYDROQUINATE DEHYDRATASE"/>
    <property type="match status" value="1"/>
</dbReference>
<dbReference type="Pfam" id="PF01487">
    <property type="entry name" value="DHquinase_I"/>
    <property type="match status" value="1"/>
</dbReference>
<dbReference type="SUPFAM" id="SSF51569">
    <property type="entry name" value="Aldolase"/>
    <property type="match status" value="1"/>
</dbReference>
<dbReference type="PROSITE" id="PS01028">
    <property type="entry name" value="DEHYDROQUINASE_I"/>
    <property type="match status" value="1"/>
</dbReference>
<feature type="chain" id="PRO_1000124782" description="3-dehydroquinate dehydratase">
    <location>
        <begin position="1"/>
        <end position="252"/>
    </location>
</feature>
<feature type="active site" description="Proton donor/acceptor" evidence="1">
    <location>
        <position position="143"/>
    </location>
</feature>
<feature type="active site" description="Schiff-base intermediate with substrate" evidence="1">
    <location>
        <position position="170"/>
    </location>
</feature>
<feature type="binding site" evidence="1">
    <location>
        <position position="21"/>
    </location>
    <ligand>
        <name>3-dehydroquinate</name>
        <dbReference type="ChEBI" id="CHEBI:32364"/>
    </ligand>
</feature>
<feature type="binding site" evidence="1">
    <location>
        <begin position="46"/>
        <end position="48"/>
    </location>
    <ligand>
        <name>3-dehydroquinate</name>
        <dbReference type="ChEBI" id="CHEBI:32364"/>
    </ligand>
</feature>
<feature type="binding site" evidence="1">
    <location>
        <position position="82"/>
    </location>
    <ligand>
        <name>3-dehydroquinate</name>
        <dbReference type="ChEBI" id="CHEBI:32364"/>
    </ligand>
</feature>
<feature type="binding site" evidence="1">
    <location>
        <position position="213"/>
    </location>
    <ligand>
        <name>3-dehydroquinate</name>
        <dbReference type="ChEBI" id="CHEBI:32364"/>
    </ligand>
</feature>
<feature type="binding site" evidence="1">
    <location>
        <position position="232"/>
    </location>
    <ligand>
        <name>3-dehydroquinate</name>
        <dbReference type="ChEBI" id="CHEBI:32364"/>
    </ligand>
</feature>
<feature type="binding site" evidence="1">
    <location>
        <position position="236"/>
    </location>
    <ligand>
        <name>3-dehydroquinate</name>
        <dbReference type="ChEBI" id="CHEBI:32364"/>
    </ligand>
</feature>
<gene>
    <name evidence="1" type="primary">aroD</name>
    <name type="ordered locus">EC55989_1860</name>
</gene>
<organism>
    <name type="scientific">Escherichia coli (strain 55989 / EAEC)</name>
    <dbReference type="NCBI Taxonomy" id="585055"/>
    <lineage>
        <taxon>Bacteria</taxon>
        <taxon>Pseudomonadati</taxon>
        <taxon>Pseudomonadota</taxon>
        <taxon>Gammaproteobacteria</taxon>
        <taxon>Enterobacterales</taxon>
        <taxon>Enterobacteriaceae</taxon>
        <taxon>Escherichia</taxon>
    </lineage>
</organism>
<reference key="1">
    <citation type="journal article" date="2009" name="PLoS Genet.">
        <title>Organised genome dynamics in the Escherichia coli species results in highly diverse adaptive paths.</title>
        <authorList>
            <person name="Touchon M."/>
            <person name="Hoede C."/>
            <person name="Tenaillon O."/>
            <person name="Barbe V."/>
            <person name="Baeriswyl S."/>
            <person name="Bidet P."/>
            <person name="Bingen E."/>
            <person name="Bonacorsi S."/>
            <person name="Bouchier C."/>
            <person name="Bouvet O."/>
            <person name="Calteau A."/>
            <person name="Chiapello H."/>
            <person name="Clermont O."/>
            <person name="Cruveiller S."/>
            <person name="Danchin A."/>
            <person name="Diard M."/>
            <person name="Dossat C."/>
            <person name="Karoui M.E."/>
            <person name="Frapy E."/>
            <person name="Garry L."/>
            <person name="Ghigo J.M."/>
            <person name="Gilles A.M."/>
            <person name="Johnson J."/>
            <person name="Le Bouguenec C."/>
            <person name="Lescat M."/>
            <person name="Mangenot S."/>
            <person name="Martinez-Jehanne V."/>
            <person name="Matic I."/>
            <person name="Nassif X."/>
            <person name="Oztas S."/>
            <person name="Petit M.A."/>
            <person name="Pichon C."/>
            <person name="Rouy Z."/>
            <person name="Ruf C.S."/>
            <person name="Schneider D."/>
            <person name="Tourret J."/>
            <person name="Vacherie B."/>
            <person name="Vallenet D."/>
            <person name="Medigue C."/>
            <person name="Rocha E.P.C."/>
            <person name="Denamur E."/>
        </authorList>
    </citation>
    <scope>NUCLEOTIDE SEQUENCE [LARGE SCALE GENOMIC DNA]</scope>
    <source>
        <strain>55989 / EAEC</strain>
    </source>
</reference>
<keyword id="KW-0028">Amino-acid biosynthesis</keyword>
<keyword id="KW-0057">Aromatic amino acid biosynthesis</keyword>
<keyword id="KW-0456">Lyase</keyword>
<keyword id="KW-1185">Reference proteome</keyword>
<keyword id="KW-0704">Schiff base</keyword>
<sequence length="252" mass="27547">MKTVTVKDLVIGTGAPKIIVSLMAKDIARVKSEALAYREADFDILEWRVDHFADLSNVESVMAAAKILRETMPEKPLLFTFRSAKEGGEQAISTEAYIALNRAAIDSGLVDMIDLELFTGDDQVKETVAYAHAHDVKVVMSNHDFHKTPEAEEIIARLRKMQSFDADIPKIALMPQSTNDVLTLLAATLEMQEQYADRPIITMSMAKTGVISRLAGEVFGSAATFGAVKKASAPGQISVNDLRTVLTILHQA</sequence>